<sequence>MMSLGLVGRKVGMTRIFTAEGDSIPVTVLDVSDNRVTQIKTVETDGYTAVQVAFGSRRASRVTKPLAGHLAKAGVEAGEILKEFRIDAAKAAELSNGAVVGADLFEVGQKVDVQGVSIGKGYAGTIKRYNFSSGRATHGNSRSHNVPGSIGMAQDPGRVFPGKRMTGHMGDVTVTVQNLEIARIDAERKLLLVKGAIPGAKGGKVFVTPAVKTKGAK</sequence>
<feature type="chain" id="PRO_1000052020" description="Large ribosomal subunit protein uL3">
    <location>
        <begin position="1"/>
        <end position="217"/>
    </location>
</feature>
<feature type="region of interest" description="Disordered" evidence="2">
    <location>
        <begin position="134"/>
        <end position="154"/>
    </location>
</feature>
<feature type="compositionally biased region" description="Polar residues" evidence="2">
    <location>
        <begin position="134"/>
        <end position="146"/>
    </location>
</feature>
<feature type="modified residue" description="N5-methylglutamine" evidence="1">
    <location>
        <position position="154"/>
    </location>
</feature>
<keyword id="KW-0488">Methylation</keyword>
<keyword id="KW-0687">Ribonucleoprotein</keyword>
<keyword id="KW-0689">Ribosomal protein</keyword>
<keyword id="KW-0694">RNA-binding</keyword>
<keyword id="KW-0699">rRNA-binding</keyword>
<accession>A0K3M5</accession>
<gene>
    <name evidence="1" type="primary">rplC</name>
    <name type="ordered locus">Bcen2424_0348</name>
</gene>
<name>RL3_BURCH</name>
<evidence type="ECO:0000255" key="1">
    <source>
        <dbReference type="HAMAP-Rule" id="MF_01325"/>
    </source>
</evidence>
<evidence type="ECO:0000256" key="2">
    <source>
        <dbReference type="SAM" id="MobiDB-lite"/>
    </source>
</evidence>
<evidence type="ECO:0000305" key="3"/>
<protein>
    <recommendedName>
        <fullName evidence="1">Large ribosomal subunit protein uL3</fullName>
    </recommendedName>
    <alternativeName>
        <fullName evidence="3">50S ribosomal protein L3</fullName>
    </alternativeName>
</protein>
<proteinExistence type="inferred from homology"/>
<dbReference type="EMBL" id="CP000458">
    <property type="protein sequence ID" value="ABK07102.1"/>
    <property type="molecule type" value="Genomic_DNA"/>
</dbReference>
<dbReference type="SMR" id="A0K3M5"/>
<dbReference type="KEGG" id="bch:Bcen2424_0348"/>
<dbReference type="HOGENOM" id="CLU_044142_4_1_4"/>
<dbReference type="GO" id="GO:0022625">
    <property type="term" value="C:cytosolic large ribosomal subunit"/>
    <property type="evidence" value="ECO:0007669"/>
    <property type="project" value="TreeGrafter"/>
</dbReference>
<dbReference type="GO" id="GO:0019843">
    <property type="term" value="F:rRNA binding"/>
    <property type="evidence" value="ECO:0007669"/>
    <property type="project" value="UniProtKB-UniRule"/>
</dbReference>
<dbReference type="GO" id="GO:0003735">
    <property type="term" value="F:structural constituent of ribosome"/>
    <property type="evidence" value="ECO:0007669"/>
    <property type="project" value="InterPro"/>
</dbReference>
<dbReference type="GO" id="GO:0006412">
    <property type="term" value="P:translation"/>
    <property type="evidence" value="ECO:0007669"/>
    <property type="project" value="UniProtKB-UniRule"/>
</dbReference>
<dbReference type="FunFam" id="2.40.30.10:FF:000004">
    <property type="entry name" value="50S ribosomal protein L3"/>
    <property type="match status" value="1"/>
</dbReference>
<dbReference type="FunFam" id="3.30.160.810:FF:000001">
    <property type="entry name" value="50S ribosomal protein L3"/>
    <property type="match status" value="1"/>
</dbReference>
<dbReference type="Gene3D" id="3.30.160.810">
    <property type="match status" value="1"/>
</dbReference>
<dbReference type="Gene3D" id="2.40.30.10">
    <property type="entry name" value="Translation factors"/>
    <property type="match status" value="1"/>
</dbReference>
<dbReference type="HAMAP" id="MF_01325_B">
    <property type="entry name" value="Ribosomal_uL3_B"/>
    <property type="match status" value="1"/>
</dbReference>
<dbReference type="InterPro" id="IPR000597">
    <property type="entry name" value="Ribosomal_uL3"/>
</dbReference>
<dbReference type="InterPro" id="IPR019927">
    <property type="entry name" value="Ribosomal_uL3_bac/org-type"/>
</dbReference>
<dbReference type="InterPro" id="IPR019926">
    <property type="entry name" value="Ribosomal_uL3_CS"/>
</dbReference>
<dbReference type="InterPro" id="IPR009000">
    <property type="entry name" value="Transl_B-barrel_sf"/>
</dbReference>
<dbReference type="NCBIfam" id="TIGR03625">
    <property type="entry name" value="L3_bact"/>
    <property type="match status" value="1"/>
</dbReference>
<dbReference type="PANTHER" id="PTHR11229">
    <property type="entry name" value="50S RIBOSOMAL PROTEIN L3"/>
    <property type="match status" value="1"/>
</dbReference>
<dbReference type="PANTHER" id="PTHR11229:SF16">
    <property type="entry name" value="LARGE RIBOSOMAL SUBUNIT PROTEIN UL3C"/>
    <property type="match status" value="1"/>
</dbReference>
<dbReference type="Pfam" id="PF00297">
    <property type="entry name" value="Ribosomal_L3"/>
    <property type="match status" value="1"/>
</dbReference>
<dbReference type="SUPFAM" id="SSF50447">
    <property type="entry name" value="Translation proteins"/>
    <property type="match status" value="1"/>
</dbReference>
<dbReference type="PROSITE" id="PS00474">
    <property type="entry name" value="RIBOSOMAL_L3"/>
    <property type="match status" value="1"/>
</dbReference>
<reference key="1">
    <citation type="submission" date="2006-08" db="EMBL/GenBank/DDBJ databases">
        <title>Complete sequence of chromosome 1 of Burkholderia cenocepacia HI2424.</title>
        <authorList>
            <person name="Copeland A."/>
            <person name="Lucas S."/>
            <person name="Lapidus A."/>
            <person name="Barry K."/>
            <person name="Detter J.C."/>
            <person name="Glavina del Rio T."/>
            <person name="Hammon N."/>
            <person name="Israni S."/>
            <person name="Pitluck S."/>
            <person name="Chain P."/>
            <person name="Malfatti S."/>
            <person name="Shin M."/>
            <person name="Vergez L."/>
            <person name="Schmutz J."/>
            <person name="Larimer F."/>
            <person name="Land M."/>
            <person name="Hauser L."/>
            <person name="Kyrpides N."/>
            <person name="Kim E."/>
            <person name="LiPuma J.J."/>
            <person name="Gonzalez C.F."/>
            <person name="Konstantinidis K."/>
            <person name="Tiedje J.M."/>
            <person name="Richardson P."/>
        </authorList>
    </citation>
    <scope>NUCLEOTIDE SEQUENCE [LARGE SCALE GENOMIC DNA]</scope>
    <source>
        <strain>HI2424</strain>
    </source>
</reference>
<comment type="function">
    <text evidence="1">One of the primary rRNA binding proteins, it binds directly near the 3'-end of the 23S rRNA, where it nucleates assembly of the 50S subunit.</text>
</comment>
<comment type="subunit">
    <text evidence="1">Part of the 50S ribosomal subunit. Forms a cluster with proteins L14 and L19.</text>
</comment>
<comment type="PTM">
    <text evidence="1">Methylated by PrmB.</text>
</comment>
<comment type="similarity">
    <text evidence="1">Belongs to the universal ribosomal protein uL3 family.</text>
</comment>
<organism>
    <name type="scientific">Burkholderia cenocepacia (strain HI2424)</name>
    <dbReference type="NCBI Taxonomy" id="331272"/>
    <lineage>
        <taxon>Bacteria</taxon>
        <taxon>Pseudomonadati</taxon>
        <taxon>Pseudomonadota</taxon>
        <taxon>Betaproteobacteria</taxon>
        <taxon>Burkholderiales</taxon>
        <taxon>Burkholderiaceae</taxon>
        <taxon>Burkholderia</taxon>
        <taxon>Burkholderia cepacia complex</taxon>
    </lineage>
</organism>